<gene>
    <name evidence="1" type="primary">atpA</name>
    <name type="ordered locus">YE4208</name>
</gene>
<proteinExistence type="inferred from homology"/>
<accession>A1JTC8</accession>
<feature type="chain" id="PRO_0000302715" description="ATP synthase subunit alpha">
    <location>
        <begin position="1"/>
        <end position="513"/>
    </location>
</feature>
<feature type="binding site" evidence="1">
    <location>
        <begin position="169"/>
        <end position="176"/>
    </location>
    <ligand>
        <name>ATP</name>
        <dbReference type="ChEBI" id="CHEBI:30616"/>
    </ligand>
</feature>
<feature type="site" description="Required for activity" evidence="1">
    <location>
        <position position="373"/>
    </location>
</feature>
<organism>
    <name type="scientific">Yersinia enterocolitica serotype O:8 / biotype 1B (strain NCTC 13174 / 8081)</name>
    <dbReference type="NCBI Taxonomy" id="393305"/>
    <lineage>
        <taxon>Bacteria</taxon>
        <taxon>Pseudomonadati</taxon>
        <taxon>Pseudomonadota</taxon>
        <taxon>Gammaproteobacteria</taxon>
        <taxon>Enterobacterales</taxon>
        <taxon>Yersiniaceae</taxon>
        <taxon>Yersinia</taxon>
    </lineage>
</organism>
<sequence length="513" mass="55124">MQLNSTEISELIKQRIAQFNVVSEAHNEGTIVSVSDGIIRVHGLADVMQGEMIALPGNRYAIALNLERDSVGAVVMGPYADLAEGMKVKCTGRILEVPVGRGLLGRVVNTLGEPVDGKGPVENDGFSAVEAIAPGVIERQSVDEPVQTGYKSVDAMIPIGRGQRELIIGDRQTGKTALAIDAIINQRDSGIKCVYVAIGQKASTVANVVRKLEEHGALANTIVVVATASESAALQYLAPYSGCAMGEYFRDRGEDALIIYDDLSKQAVAYRQISLLLRRPPGREAYPGDVFYLHSRLLERAARVNADYVEAFTKGEVKGKTGSLTALPIIETQAGDVSAFVPTNVISITDGQIFLESSLFNAGIRPAVNPGISVSRVGGAAQTKIMKKLSGGIRTALAQYRELAAFSQFASDLDDATRKQLSHGQKVTELLKQKQYAPMSVAQQSLVLFAAERGYLGDIELAKVGSFEAALLAFADREHAELLQQINQTGAYNDEIEAKLKGILDTFKATQSW</sequence>
<protein>
    <recommendedName>
        <fullName evidence="1">ATP synthase subunit alpha</fullName>
        <ecNumber evidence="1">7.1.2.2</ecNumber>
    </recommendedName>
    <alternativeName>
        <fullName evidence="1">ATP synthase F1 sector subunit alpha</fullName>
    </alternativeName>
    <alternativeName>
        <fullName evidence="1">F-ATPase subunit alpha</fullName>
    </alternativeName>
</protein>
<keyword id="KW-0066">ATP synthesis</keyword>
<keyword id="KW-0067">ATP-binding</keyword>
<keyword id="KW-0997">Cell inner membrane</keyword>
<keyword id="KW-1003">Cell membrane</keyword>
<keyword id="KW-0139">CF(1)</keyword>
<keyword id="KW-0375">Hydrogen ion transport</keyword>
<keyword id="KW-0406">Ion transport</keyword>
<keyword id="KW-0472">Membrane</keyword>
<keyword id="KW-0547">Nucleotide-binding</keyword>
<keyword id="KW-1278">Translocase</keyword>
<keyword id="KW-0813">Transport</keyword>
<comment type="function">
    <text evidence="1">Produces ATP from ADP in the presence of a proton gradient across the membrane. The alpha chain is a regulatory subunit.</text>
</comment>
<comment type="catalytic activity">
    <reaction evidence="1">
        <text>ATP + H2O + 4 H(+)(in) = ADP + phosphate + 5 H(+)(out)</text>
        <dbReference type="Rhea" id="RHEA:57720"/>
        <dbReference type="ChEBI" id="CHEBI:15377"/>
        <dbReference type="ChEBI" id="CHEBI:15378"/>
        <dbReference type="ChEBI" id="CHEBI:30616"/>
        <dbReference type="ChEBI" id="CHEBI:43474"/>
        <dbReference type="ChEBI" id="CHEBI:456216"/>
        <dbReference type="EC" id="7.1.2.2"/>
    </reaction>
</comment>
<comment type="subunit">
    <text evidence="1">F-type ATPases have 2 components, CF(1) - the catalytic core - and CF(0) - the membrane proton channel. CF(1) has five subunits: alpha(3), beta(3), gamma(1), delta(1), epsilon(1). CF(0) has three main subunits: a(1), b(2) and c(9-12). The alpha and beta chains form an alternating ring which encloses part of the gamma chain. CF(1) is attached to CF(0) by a central stalk formed by the gamma and epsilon chains, while a peripheral stalk is formed by the delta and b chains.</text>
</comment>
<comment type="subcellular location">
    <subcellularLocation>
        <location evidence="1">Cell inner membrane</location>
        <topology evidence="1">Peripheral membrane protein</topology>
    </subcellularLocation>
</comment>
<comment type="similarity">
    <text evidence="1">Belongs to the ATPase alpha/beta chains family.</text>
</comment>
<reference key="1">
    <citation type="journal article" date="2006" name="PLoS Genet.">
        <title>The complete genome sequence and comparative genome analysis of the high pathogenicity Yersinia enterocolitica strain 8081.</title>
        <authorList>
            <person name="Thomson N.R."/>
            <person name="Howard S."/>
            <person name="Wren B.W."/>
            <person name="Holden M.T.G."/>
            <person name="Crossman L."/>
            <person name="Challis G.L."/>
            <person name="Churcher C."/>
            <person name="Mungall K."/>
            <person name="Brooks K."/>
            <person name="Chillingworth T."/>
            <person name="Feltwell T."/>
            <person name="Abdellah Z."/>
            <person name="Hauser H."/>
            <person name="Jagels K."/>
            <person name="Maddison M."/>
            <person name="Moule S."/>
            <person name="Sanders M."/>
            <person name="Whitehead S."/>
            <person name="Quail M.A."/>
            <person name="Dougan G."/>
            <person name="Parkhill J."/>
            <person name="Prentice M.B."/>
        </authorList>
    </citation>
    <scope>NUCLEOTIDE SEQUENCE [LARGE SCALE GENOMIC DNA]</scope>
    <source>
        <strain>NCTC 13174 / 8081</strain>
    </source>
</reference>
<evidence type="ECO:0000255" key="1">
    <source>
        <dbReference type="HAMAP-Rule" id="MF_01346"/>
    </source>
</evidence>
<name>ATPA_YERE8</name>
<dbReference type="EC" id="7.1.2.2" evidence="1"/>
<dbReference type="EMBL" id="AM286415">
    <property type="protein sequence ID" value="CAL14222.1"/>
    <property type="molecule type" value="Genomic_DNA"/>
</dbReference>
<dbReference type="RefSeq" id="WP_005161175.1">
    <property type="nucleotide sequence ID" value="NC_008800.1"/>
</dbReference>
<dbReference type="RefSeq" id="YP_001008340.1">
    <property type="nucleotide sequence ID" value="NC_008800.1"/>
</dbReference>
<dbReference type="SMR" id="A1JTC8"/>
<dbReference type="GeneID" id="75142735"/>
<dbReference type="KEGG" id="yen:YE4208"/>
<dbReference type="PATRIC" id="fig|393305.7.peg.4474"/>
<dbReference type="eggNOG" id="COG0056">
    <property type="taxonomic scope" value="Bacteria"/>
</dbReference>
<dbReference type="HOGENOM" id="CLU_010091_2_1_6"/>
<dbReference type="OrthoDB" id="9803053at2"/>
<dbReference type="Proteomes" id="UP000000642">
    <property type="component" value="Chromosome"/>
</dbReference>
<dbReference type="GO" id="GO:0005886">
    <property type="term" value="C:plasma membrane"/>
    <property type="evidence" value="ECO:0007669"/>
    <property type="project" value="UniProtKB-SubCell"/>
</dbReference>
<dbReference type="GO" id="GO:0045259">
    <property type="term" value="C:proton-transporting ATP synthase complex"/>
    <property type="evidence" value="ECO:0007669"/>
    <property type="project" value="UniProtKB-KW"/>
</dbReference>
<dbReference type="GO" id="GO:0043531">
    <property type="term" value="F:ADP binding"/>
    <property type="evidence" value="ECO:0007669"/>
    <property type="project" value="TreeGrafter"/>
</dbReference>
<dbReference type="GO" id="GO:0005524">
    <property type="term" value="F:ATP binding"/>
    <property type="evidence" value="ECO:0007669"/>
    <property type="project" value="UniProtKB-UniRule"/>
</dbReference>
<dbReference type="GO" id="GO:0046933">
    <property type="term" value="F:proton-transporting ATP synthase activity, rotational mechanism"/>
    <property type="evidence" value="ECO:0007669"/>
    <property type="project" value="UniProtKB-UniRule"/>
</dbReference>
<dbReference type="CDD" id="cd18113">
    <property type="entry name" value="ATP-synt_F1_alpha_C"/>
    <property type="match status" value="1"/>
</dbReference>
<dbReference type="CDD" id="cd18116">
    <property type="entry name" value="ATP-synt_F1_alpha_N"/>
    <property type="match status" value="1"/>
</dbReference>
<dbReference type="CDD" id="cd01132">
    <property type="entry name" value="F1-ATPase_alpha_CD"/>
    <property type="match status" value="1"/>
</dbReference>
<dbReference type="FunFam" id="1.20.150.20:FF:000001">
    <property type="entry name" value="ATP synthase subunit alpha"/>
    <property type="match status" value="1"/>
</dbReference>
<dbReference type="FunFam" id="2.40.30.20:FF:000001">
    <property type="entry name" value="ATP synthase subunit alpha"/>
    <property type="match status" value="1"/>
</dbReference>
<dbReference type="FunFam" id="3.40.50.300:FF:000002">
    <property type="entry name" value="ATP synthase subunit alpha"/>
    <property type="match status" value="1"/>
</dbReference>
<dbReference type="Gene3D" id="2.40.30.20">
    <property type="match status" value="1"/>
</dbReference>
<dbReference type="Gene3D" id="1.20.150.20">
    <property type="entry name" value="ATP synthase alpha/beta chain, C-terminal domain"/>
    <property type="match status" value="1"/>
</dbReference>
<dbReference type="Gene3D" id="3.40.50.300">
    <property type="entry name" value="P-loop containing nucleotide triphosphate hydrolases"/>
    <property type="match status" value="1"/>
</dbReference>
<dbReference type="HAMAP" id="MF_01346">
    <property type="entry name" value="ATP_synth_alpha_bact"/>
    <property type="match status" value="1"/>
</dbReference>
<dbReference type="InterPro" id="IPR023366">
    <property type="entry name" value="ATP_synth_asu-like_sf"/>
</dbReference>
<dbReference type="InterPro" id="IPR000793">
    <property type="entry name" value="ATP_synth_asu_C"/>
</dbReference>
<dbReference type="InterPro" id="IPR038376">
    <property type="entry name" value="ATP_synth_asu_C_sf"/>
</dbReference>
<dbReference type="InterPro" id="IPR033732">
    <property type="entry name" value="ATP_synth_F1_a_nt-bd_dom"/>
</dbReference>
<dbReference type="InterPro" id="IPR005294">
    <property type="entry name" value="ATP_synth_F1_asu"/>
</dbReference>
<dbReference type="InterPro" id="IPR020003">
    <property type="entry name" value="ATPase_a/bsu_AS"/>
</dbReference>
<dbReference type="InterPro" id="IPR004100">
    <property type="entry name" value="ATPase_F1/V1/A1_a/bsu_N"/>
</dbReference>
<dbReference type="InterPro" id="IPR036121">
    <property type="entry name" value="ATPase_F1/V1/A1_a/bsu_N_sf"/>
</dbReference>
<dbReference type="InterPro" id="IPR000194">
    <property type="entry name" value="ATPase_F1/V1/A1_a/bsu_nucl-bd"/>
</dbReference>
<dbReference type="InterPro" id="IPR027417">
    <property type="entry name" value="P-loop_NTPase"/>
</dbReference>
<dbReference type="NCBIfam" id="TIGR00962">
    <property type="entry name" value="atpA"/>
    <property type="match status" value="1"/>
</dbReference>
<dbReference type="NCBIfam" id="NF009884">
    <property type="entry name" value="PRK13343.1"/>
    <property type="match status" value="1"/>
</dbReference>
<dbReference type="PANTHER" id="PTHR48082">
    <property type="entry name" value="ATP SYNTHASE SUBUNIT ALPHA, MITOCHONDRIAL"/>
    <property type="match status" value="1"/>
</dbReference>
<dbReference type="PANTHER" id="PTHR48082:SF2">
    <property type="entry name" value="ATP SYNTHASE SUBUNIT ALPHA, MITOCHONDRIAL"/>
    <property type="match status" value="1"/>
</dbReference>
<dbReference type="Pfam" id="PF00006">
    <property type="entry name" value="ATP-synt_ab"/>
    <property type="match status" value="1"/>
</dbReference>
<dbReference type="Pfam" id="PF00306">
    <property type="entry name" value="ATP-synt_ab_C"/>
    <property type="match status" value="1"/>
</dbReference>
<dbReference type="Pfam" id="PF02874">
    <property type="entry name" value="ATP-synt_ab_N"/>
    <property type="match status" value="1"/>
</dbReference>
<dbReference type="SUPFAM" id="SSF47917">
    <property type="entry name" value="C-terminal domain of alpha and beta subunits of F1 ATP synthase"/>
    <property type="match status" value="1"/>
</dbReference>
<dbReference type="SUPFAM" id="SSF50615">
    <property type="entry name" value="N-terminal domain of alpha and beta subunits of F1 ATP synthase"/>
    <property type="match status" value="1"/>
</dbReference>
<dbReference type="SUPFAM" id="SSF52540">
    <property type="entry name" value="P-loop containing nucleoside triphosphate hydrolases"/>
    <property type="match status" value="1"/>
</dbReference>
<dbReference type="PROSITE" id="PS00152">
    <property type="entry name" value="ATPASE_ALPHA_BETA"/>
    <property type="match status" value="1"/>
</dbReference>